<sequence>MTDEPQSDEQQTTEQERPLGTKRATRADGLRRPGVRSGLAERRSPAADSVRNGAAAVRRFLLRDVFALGLMIAALVIVILFFTLLGATKPTSSGTGIPLSQVFTLARDRAIVEATLLDEDARVQVHTRDGAEYWAAYPSSGAQTATLSSALERGGAIVAVKQQPGKAQVTIVVQFLLPILLLVCLFALFMRIGQDGGAGGIASFSNFTGRGRKKGKGTAHRVTFADIAGVPEAVAELAEIRDYLDDPSRYLDLGAAAPKGVLLVGPPGTGKTLLAKAVAGEADAAFFSLSGSDFVESLVGVGAARVRDLFAKARRMSPAIIFIDEFDAAGRKRGAGIGQGNDEREQTLNQLLVEMDGFSGDGGLVVMGATNRPDILDPALLRPGRFDRQITVDTPDVHGRSEILRLHGSKRPMAPDADLDEIARLTPGFSGAELANVVNEAALLTVRGGRREISQKLLEESIDRVVAGPAKKHLLTERERWIISIHESSHAVVTEAMGTGATARKVSIVARGRSLGTAAHMLTDRDQTIMEEPDLVMQLIAMLAGAAGERIEFGHLSTGVHDDLHEATSLARSMVTSFGMSDELGPVTIGEKSGEVFLGASLQDLGAVGPKTLDLIDDAVERLVKDAELVARAILRINIDAVHETAHALLEHETLSGVALEAVLSTVTTVEPEHFPELRERERGSARDRDA</sequence>
<name>FTSH2_CONWI</name>
<dbReference type="EC" id="3.4.24.-" evidence="1"/>
<dbReference type="EMBL" id="CP001854">
    <property type="protein sequence ID" value="ADB53175.1"/>
    <property type="molecule type" value="Genomic_DNA"/>
</dbReference>
<dbReference type="RefSeq" id="WP_012936226.1">
    <property type="nucleotide sequence ID" value="NC_013739.1"/>
</dbReference>
<dbReference type="SMR" id="D3FA80"/>
<dbReference type="STRING" id="469383.Cwoe_4762"/>
<dbReference type="KEGG" id="cwo:Cwoe_4762"/>
<dbReference type="eggNOG" id="COG0465">
    <property type="taxonomic scope" value="Bacteria"/>
</dbReference>
<dbReference type="HOGENOM" id="CLU_000688_16_1_11"/>
<dbReference type="OrthoDB" id="9809379at2"/>
<dbReference type="Proteomes" id="UP000008229">
    <property type="component" value="Chromosome"/>
</dbReference>
<dbReference type="GO" id="GO:0005886">
    <property type="term" value="C:plasma membrane"/>
    <property type="evidence" value="ECO:0007669"/>
    <property type="project" value="UniProtKB-SubCell"/>
</dbReference>
<dbReference type="GO" id="GO:0005524">
    <property type="term" value="F:ATP binding"/>
    <property type="evidence" value="ECO:0007669"/>
    <property type="project" value="UniProtKB-UniRule"/>
</dbReference>
<dbReference type="GO" id="GO:0016887">
    <property type="term" value="F:ATP hydrolysis activity"/>
    <property type="evidence" value="ECO:0007669"/>
    <property type="project" value="UniProtKB-UniRule"/>
</dbReference>
<dbReference type="GO" id="GO:0004176">
    <property type="term" value="F:ATP-dependent peptidase activity"/>
    <property type="evidence" value="ECO:0007669"/>
    <property type="project" value="InterPro"/>
</dbReference>
<dbReference type="GO" id="GO:0004222">
    <property type="term" value="F:metalloendopeptidase activity"/>
    <property type="evidence" value="ECO:0007669"/>
    <property type="project" value="InterPro"/>
</dbReference>
<dbReference type="GO" id="GO:0008270">
    <property type="term" value="F:zinc ion binding"/>
    <property type="evidence" value="ECO:0007669"/>
    <property type="project" value="UniProtKB-UniRule"/>
</dbReference>
<dbReference type="GO" id="GO:0030163">
    <property type="term" value="P:protein catabolic process"/>
    <property type="evidence" value="ECO:0007669"/>
    <property type="project" value="UniProtKB-UniRule"/>
</dbReference>
<dbReference type="GO" id="GO:0006508">
    <property type="term" value="P:proteolysis"/>
    <property type="evidence" value="ECO:0007669"/>
    <property type="project" value="UniProtKB-KW"/>
</dbReference>
<dbReference type="CDD" id="cd19501">
    <property type="entry name" value="RecA-like_FtsH"/>
    <property type="match status" value="1"/>
</dbReference>
<dbReference type="FunFam" id="1.10.8.60:FF:000001">
    <property type="entry name" value="ATP-dependent zinc metalloprotease FtsH"/>
    <property type="match status" value="1"/>
</dbReference>
<dbReference type="FunFam" id="3.40.50.300:FF:000001">
    <property type="entry name" value="ATP-dependent zinc metalloprotease FtsH"/>
    <property type="match status" value="1"/>
</dbReference>
<dbReference type="Gene3D" id="1.10.8.60">
    <property type="match status" value="1"/>
</dbReference>
<dbReference type="Gene3D" id="3.40.50.300">
    <property type="entry name" value="P-loop containing nucleotide triphosphate hydrolases"/>
    <property type="match status" value="1"/>
</dbReference>
<dbReference type="Gene3D" id="1.20.58.760">
    <property type="entry name" value="Peptidase M41"/>
    <property type="match status" value="1"/>
</dbReference>
<dbReference type="HAMAP" id="MF_01458">
    <property type="entry name" value="FtsH"/>
    <property type="match status" value="1"/>
</dbReference>
<dbReference type="InterPro" id="IPR003593">
    <property type="entry name" value="AAA+_ATPase"/>
</dbReference>
<dbReference type="InterPro" id="IPR041569">
    <property type="entry name" value="AAA_lid_3"/>
</dbReference>
<dbReference type="InterPro" id="IPR003959">
    <property type="entry name" value="ATPase_AAA_core"/>
</dbReference>
<dbReference type="InterPro" id="IPR003960">
    <property type="entry name" value="ATPase_AAA_CS"/>
</dbReference>
<dbReference type="InterPro" id="IPR005936">
    <property type="entry name" value="FtsH"/>
</dbReference>
<dbReference type="InterPro" id="IPR027417">
    <property type="entry name" value="P-loop_NTPase"/>
</dbReference>
<dbReference type="InterPro" id="IPR000642">
    <property type="entry name" value="Peptidase_M41"/>
</dbReference>
<dbReference type="InterPro" id="IPR037219">
    <property type="entry name" value="Peptidase_M41-like"/>
</dbReference>
<dbReference type="NCBIfam" id="TIGR01241">
    <property type="entry name" value="FtsH_fam"/>
    <property type="match status" value="1"/>
</dbReference>
<dbReference type="PANTHER" id="PTHR23076:SF97">
    <property type="entry name" value="ATP-DEPENDENT ZINC METALLOPROTEASE YME1L1"/>
    <property type="match status" value="1"/>
</dbReference>
<dbReference type="PANTHER" id="PTHR23076">
    <property type="entry name" value="METALLOPROTEASE M41 FTSH"/>
    <property type="match status" value="1"/>
</dbReference>
<dbReference type="Pfam" id="PF00004">
    <property type="entry name" value="AAA"/>
    <property type="match status" value="1"/>
</dbReference>
<dbReference type="Pfam" id="PF17862">
    <property type="entry name" value="AAA_lid_3"/>
    <property type="match status" value="1"/>
</dbReference>
<dbReference type="Pfam" id="PF01434">
    <property type="entry name" value="Peptidase_M41"/>
    <property type="match status" value="1"/>
</dbReference>
<dbReference type="PRINTS" id="PR00830">
    <property type="entry name" value="ENDOLAPTASE"/>
</dbReference>
<dbReference type="SMART" id="SM00382">
    <property type="entry name" value="AAA"/>
    <property type="match status" value="1"/>
</dbReference>
<dbReference type="SUPFAM" id="SSF140990">
    <property type="entry name" value="FtsH protease domain-like"/>
    <property type="match status" value="1"/>
</dbReference>
<dbReference type="SUPFAM" id="SSF52540">
    <property type="entry name" value="P-loop containing nucleoside triphosphate hydrolases"/>
    <property type="match status" value="1"/>
</dbReference>
<dbReference type="PROSITE" id="PS00674">
    <property type="entry name" value="AAA"/>
    <property type="match status" value="1"/>
</dbReference>
<feature type="chain" id="PRO_0000400338" description="ATP-dependent zinc metalloprotease FtsH 2">
    <location>
        <begin position="1"/>
        <end position="691"/>
    </location>
</feature>
<feature type="topological domain" description="Cytoplasmic" evidence="1">
    <location>
        <begin position="1"/>
        <end position="64"/>
    </location>
</feature>
<feature type="transmembrane region" description="Helical" evidence="1">
    <location>
        <begin position="65"/>
        <end position="85"/>
    </location>
</feature>
<feature type="topological domain" description="Extracellular" evidence="1">
    <location>
        <begin position="86"/>
        <end position="168"/>
    </location>
</feature>
<feature type="transmembrane region" description="Helical" evidence="1">
    <location>
        <begin position="169"/>
        <end position="189"/>
    </location>
</feature>
<feature type="topological domain" description="Cytoplasmic" evidence="1">
    <location>
        <begin position="190"/>
        <end position="691"/>
    </location>
</feature>
<feature type="region of interest" description="Disordered" evidence="2">
    <location>
        <begin position="1"/>
        <end position="48"/>
    </location>
</feature>
<feature type="compositionally biased region" description="Basic and acidic residues" evidence="2">
    <location>
        <begin position="14"/>
        <end position="31"/>
    </location>
</feature>
<feature type="active site" evidence="1">
    <location>
        <position position="487"/>
    </location>
</feature>
<feature type="binding site" evidence="1">
    <location>
        <begin position="265"/>
        <end position="272"/>
    </location>
    <ligand>
        <name>ATP</name>
        <dbReference type="ChEBI" id="CHEBI:30616"/>
    </ligand>
</feature>
<feature type="binding site" evidence="1">
    <location>
        <position position="486"/>
    </location>
    <ligand>
        <name>Zn(2+)</name>
        <dbReference type="ChEBI" id="CHEBI:29105"/>
        <note>catalytic</note>
    </ligand>
</feature>
<feature type="binding site" evidence="1">
    <location>
        <position position="490"/>
    </location>
    <ligand>
        <name>Zn(2+)</name>
        <dbReference type="ChEBI" id="CHEBI:29105"/>
        <note>catalytic</note>
    </ligand>
</feature>
<feature type="binding site" evidence="1">
    <location>
        <position position="563"/>
    </location>
    <ligand>
        <name>Zn(2+)</name>
        <dbReference type="ChEBI" id="CHEBI:29105"/>
        <note>catalytic</note>
    </ligand>
</feature>
<gene>
    <name evidence="1" type="primary">ftsH2</name>
    <name type="ordered locus">Cwoe_4762</name>
</gene>
<keyword id="KW-0067">ATP-binding</keyword>
<keyword id="KW-1003">Cell membrane</keyword>
<keyword id="KW-0378">Hydrolase</keyword>
<keyword id="KW-0472">Membrane</keyword>
<keyword id="KW-0479">Metal-binding</keyword>
<keyword id="KW-0482">Metalloprotease</keyword>
<keyword id="KW-0547">Nucleotide-binding</keyword>
<keyword id="KW-0645">Protease</keyword>
<keyword id="KW-1185">Reference proteome</keyword>
<keyword id="KW-0812">Transmembrane</keyword>
<keyword id="KW-1133">Transmembrane helix</keyword>
<keyword id="KW-0862">Zinc</keyword>
<reference key="1">
    <citation type="submission" date="2010-01" db="EMBL/GenBank/DDBJ databases">
        <title>The complete genome of Conexibacter woesei DSM 14684.</title>
        <authorList>
            <consortium name="US DOE Joint Genome Institute (JGI-PGF)"/>
            <person name="Lucas S."/>
            <person name="Copeland A."/>
            <person name="Lapidus A."/>
            <person name="Glavina del Rio T."/>
            <person name="Dalin E."/>
            <person name="Tice H."/>
            <person name="Bruce D."/>
            <person name="Goodwin L."/>
            <person name="Pitluck S."/>
            <person name="Kyrpides N."/>
            <person name="Mavromatis K."/>
            <person name="Ivanova N."/>
            <person name="Mikhailova N."/>
            <person name="Chertkov O."/>
            <person name="Brettin T."/>
            <person name="Detter J.C."/>
            <person name="Han C."/>
            <person name="Larimer F."/>
            <person name="Land M."/>
            <person name="Hauser L."/>
            <person name="Markowitz V."/>
            <person name="Cheng J.-F."/>
            <person name="Hugenholtz P."/>
            <person name="Woyke T."/>
            <person name="Wu D."/>
            <person name="Pukall R."/>
            <person name="Steenblock K."/>
            <person name="Schneider S."/>
            <person name="Klenk H.-P."/>
            <person name="Eisen J.A."/>
        </authorList>
    </citation>
    <scope>NUCLEOTIDE SEQUENCE [LARGE SCALE GENOMIC DNA]</scope>
    <source>
        <strain>DSM 14684 / CCUG 47730 / CIP 108061 / JCM 11494 / NBRC 100937 / ID131577</strain>
    </source>
</reference>
<proteinExistence type="inferred from homology"/>
<protein>
    <recommendedName>
        <fullName evidence="1">ATP-dependent zinc metalloprotease FtsH 2</fullName>
        <ecNumber evidence="1">3.4.24.-</ecNumber>
    </recommendedName>
</protein>
<accession>D3FA80</accession>
<evidence type="ECO:0000255" key="1">
    <source>
        <dbReference type="HAMAP-Rule" id="MF_01458"/>
    </source>
</evidence>
<evidence type="ECO:0000256" key="2">
    <source>
        <dbReference type="SAM" id="MobiDB-lite"/>
    </source>
</evidence>
<comment type="function">
    <text evidence="1">Acts as a processive, ATP-dependent zinc metallopeptidase for both cytoplasmic and membrane proteins. Plays a role in the quality control of integral membrane proteins.</text>
</comment>
<comment type="cofactor">
    <cofactor evidence="1">
        <name>Zn(2+)</name>
        <dbReference type="ChEBI" id="CHEBI:29105"/>
    </cofactor>
    <text evidence="1">Binds 1 zinc ion per subunit.</text>
</comment>
<comment type="subunit">
    <text evidence="1">Homohexamer.</text>
</comment>
<comment type="subcellular location">
    <subcellularLocation>
        <location evidence="1">Cell membrane</location>
        <topology evidence="1">Multi-pass membrane protein</topology>
        <orientation evidence="1">Cytoplasmic side</orientation>
    </subcellularLocation>
</comment>
<comment type="similarity">
    <text evidence="1">In the central section; belongs to the AAA ATPase family.</text>
</comment>
<comment type="similarity">
    <text evidence="1">In the C-terminal section; belongs to the peptidase M41 family.</text>
</comment>
<organism>
    <name type="scientific">Conexibacter woesei (strain DSM 14684 / CCUG 47730 / CIP 108061 / JCM 11494 / NBRC 100937 / ID131577)</name>
    <dbReference type="NCBI Taxonomy" id="469383"/>
    <lineage>
        <taxon>Bacteria</taxon>
        <taxon>Bacillati</taxon>
        <taxon>Actinomycetota</taxon>
        <taxon>Thermoleophilia</taxon>
        <taxon>Solirubrobacterales</taxon>
        <taxon>Conexibacteraceae</taxon>
        <taxon>Conexibacter</taxon>
    </lineage>
</organism>